<evidence type="ECO:0000255" key="1">
    <source>
        <dbReference type="HAMAP-Rule" id="MF_00440"/>
    </source>
</evidence>
<name>NRDR_THEVB</name>
<keyword id="KW-0067">ATP-binding</keyword>
<keyword id="KW-0238">DNA-binding</keyword>
<keyword id="KW-0479">Metal-binding</keyword>
<keyword id="KW-0547">Nucleotide-binding</keyword>
<keyword id="KW-1185">Reference proteome</keyword>
<keyword id="KW-0678">Repressor</keyword>
<keyword id="KW-0804">Transcription</keyword>
<keyword id="KW-0805">Transcription regulation</keyword>
<keyword id="KW-0862">Zinc</keyword>
<keyword id="KW-0863">Zinc-finger</keyword>
<organism>
    <name type="scientific">Thermosynechococcus vestitus (strain NIES-2133 / IAM M-273 / BP-1)</name>
    <dbReference type="NCBI Taxonomy" id="197221"/>
    <lineage>
        <taxon>Bacteria</taxon>
        <taxon>Bacillati</taxon>
        <taxon>Cyanobacteriota</taxon>
        <taxon>Cyanophyceae</taxon>
        <taxon>Acaryochloridales</taxon>
        <taxon>Thermosynechococcaceae</taxon>
        <taxon>Thermosynechococcus</taxon>
    </lineage>
</organism>
<feature type="chain" id="PRO_0000182367" description="Transcriptional repressor NrdR">
    <location>
        <begin position="1"/>
        <end position="162"/>
    </location>
</feature>
<feature type="domain" description="ATP-cone" evidence="1">
    <location>
        <begin position="49"/>
        <end position="139"/>
    </location>
</feature>
<feature type="zinc finger region" evidence="1">
    <location>
        <begin position="3"/>
        <end position="34"/>
    </location>
</feature>
<protein>
    <recommendedName>
        <fullName evidence="1">Transcriptional repressor NrdR</fullName>
    </recommendedName>
</protein>
<accession>Q8DHT4</accession>
<dbReference type="EMBL" id="BA000039">
    <property type="protein sequence ID" value="BAC09413.1"/>
    <property type="molecule type" value="Genomic_DNA"/>
</dbReference>
<dbReference type="RefSeq" id="NP_682651.1">
    <property type="nucleotide sequence ID" value="NC_004113.1"/>
</dbReference>
<dbReference type="RefSeq" id="WP_011057698.1">
    <property type="nucleotide sequence ID" value="NC_004113.1"/>
</dbReference>
<dbReference type="SMR" id="Q8DHT4"/>
<dbReference type="STRING" id="197221.gene:10748467"/>
<dbReference type="EnsemblBacteria" id="BAC09413">
    <property type="protein sequence ID" value="BAC09413"/>
    <property type="gene ID" value="BAC09413"/>
</dbReference>
<dbReference type="KEGG" id="tel:tlr1861"/>
<dbReference type="PATRIC" id="fig|197221.4.peg.1944"/>
<dbReference type="eggNOG" id="COG1327">
    <property type="taxonomic scope" value="Bacteria"/>
</dbReference>
<dbReference type="Proteomes" id="UP000000440">
    <property type="component" value="Chromosome"/>
</dbReference>
<dbReference type="GO" id="GO:0005524">
    <property type="term" value="F:ATP binding"/>
    <property type="evidence" value="ECO:0007669"/>
    <property type="project" value="UniProtKB-KW"/>
</dbReference>
<dbReference type="GO" id="GO:0003677">
    <property type="term" value="F:DNA binding"/>
    <property type="evidence" value="ECO:0007669"/>
    <property type="project" value="UniProtKB-KW"/>
</dbReference>
<dbReference type="GO" id="GO:0008270">
    <property type="term" value="F:zinc ion binding"/>
    <property type="evidence" value="ECO:0007669"/>
    <property type="project" value="UniProtKB-UniRule"/>
</dbReference>
<dbReference type="GO" id="GO:0045892">
    <property type="term" value="P:negative regulation of DNA-templated transcription"/>
    <property type="evidence" value="ECO:0007669"/>
    <property type="project" value="UniProtKB-UniRule"/>
</dbReference>
<dbReference type="HAMAP" id="MF_00440">
    <property type="entry name" value="NrdR"/>
    <property type="match status" value="1"/>
</dbReference>
<dbReference type="InterPro" id="IPR005144">
    <property type="entry name" value="ATP-cone_dom"/>
</dbReference>
<dbReference type="InterPro" id="IPR055173">
    <property type="entry name" value="NrdR-like_N"/>
</dbReference>
<dbReference type="InterPro" id="IPR003796">
    <property type="entry name" value="RNR_NrdR-like"/>
</dbReference>
<dbReference type="NCBIfam" id="TIGR00244">
    <property type="entry name" value="transcriptional regulator NrdR"/>
    <property type="match status" value="1"/>
</dbReference>
<dbReference type="PANTHER" id="PTHR30455">
    <property type="entry name" value="TRANSCRIPTIONAL REPRESSOR NRDR"/>
    <property type="match status" value="1"/>
</dbReference>
<dbReference type="PANTHER" id="PTHR30455:SF2">
    <property type="entry name" value="TRANSCRIPTIONAL REPRESSOR NRDR"/>
    <property type="match status" value="1"/>
</dbReference>
<dbReference type="Pfam" id="PF03477">
    <property type="entry name" value="ATP-cone"/>
    <property type="match status" value="1"/>
</dbReference>
<dbReference type="Pfam" id="PF22811">
    <property type="entry name" value="Zn_ribbon_NrdR"/>
    <property type="match status" value="1"/>
</dbReference>
<dbReference type="PROSITE" id="PS51161">
    <property type="entry name" value="ATP_CONE"/>
    <property type="match status" value="1"/>
</dbReference>
<gene>
    <name evidence="1" type="primary">nrdR</name>
    <name type="ordered locus">tlr1861</name>
</gene>
<reference key="1">
    <citation type="journal article" date="2002" name="DNA Res.">
        <title>Complete genome structure of the thermophilic cyanobacterium Thermosynechococcus elongatus BP-1.</title>
        <authorList>
            <person name="Nakamura Y."/>
            <person name="Kaneko T."/>
            <person name="Sato S."/>
            <person name="Ikeuchi M."/>
            <person name="Katoh H."/>
            <person name="Sasamoto S."/>
            <person name="Watanabe A."/>
            <person name="Iriguchi M."/>
            <person name="Kawashima K."/>
            <person name="Kimura T."/>
            <person name="Kishida Y."/>
            <person name="Kiyokawa C."/>
            <person name="Kohara M."/>
            <person name="Matsumoto M."/>
            <person name="Matsuno A."/>
            <person name="Nakazaki N."/>
            <person name="Shimpo S."/>
            <person name="Sugimoto M."/>
            <person name="Takeuchi C."/>
            <person name="Yamada M."/>
            <person name="Tabata S."/>
        </authorList>
    </citation>
    <scope>NUCLEOTIDE SEQUENCE [LARGE SCALE GENOMIC DNA]</scope>
    <source>
        <strain>NIES-2133 / IAM M-273 / BP-1</strain>
    </source>
</reference>
<sequence>MQCPYCHHTDSRVLESRSAEGGQSIRRRRECLACGRRFTTYERIEFVPITVIKRNGDRESFDRSKLLRGIMTACGKTNIPQQKIEALVDDIEADLQLRSRREVTSAELGEAALQRLRHLSEVAYVRFASVYRQFQGISDFVAELAHLQETPASPELLTISQS</sequence>
<comment type="function">
    <text evidence="1">Negatively regulates transcription of bacterial ribonucleotide reductase nrd genes and operons by binding to NrdR-boxes.</text>
</comment>
<comment type="cofactor">
    <cofactor evidence="1">
        <name>Zn(2+)</name>
        <dbReference type="ChEBI" id="CHEBI:29105"/>
    </cofactor>
    <text evidence="1">Binds 1 zinc ion.</text>
</comment>
<comment type="similarity">
    <text evidence="1">Belongs to the NrdR family.</text>
</comment>
<proteinExistence type="inferred from homology"/>